<dbReference type="EC" id="3.1.21.10" evidence="1"/>
<dbReference type="EMBL" id="CP001048">
    <property type="protein sequence ID" value="ACC89061.1"/>
    <property type="molecule type" value="Genomic_DNA"/>
</dbReference>
<dbReference type="RefSeq" id="WP_002211201.1">
    <property type="nucleotide sequence ID" value="NZ_CP009780.1"/>
</dbReference>
<dbReference type="SMR" id="B2K322"/>
<dbReference type="GeneID" id="57976605"/>
<dbReference type="KEGG" id="ypb:YPTS_2098"/>
<dbReference type="PATRIC" id="fig|502801.10.peg.1489"/>
<dbReference type="GO" id="GO:0005737">
    <property type="term" value="C:cytoplasm"/>
    <property type="evidence" value="ECO:0007669"/>
    <property type="project" value="UniProtKB-SubCell"/>
</dbReference>
<dbReference type="GO" id="GO:0048476">
    <property type="term" value="C:Holliday junction resolvase complex"/>
    <property type="evidence" value="ECO:0007669"/>
    <property type="project" value="UniProtKB-UniRule"/>
</dbReference>
<dbReference type="GO" id="GO:0008821">
    <property type="term" value="F:crossover junction DNA endonuclease activity"/>
    <property type="evidence" value="ECO:0007669"/>
    <property type="project" value="UniProtKB-UniRule"/>
</dbReference>
<dbReference type="GO" id="GO:0003677">
    <property type="term" value="F:DNA binding"/>
    <property type="evidence" value="ECO:0007669"/>
    <property type="project" value="UniProtKB-KW"/>
</dbReference>
<dbReference type="GO" id="GO:0000287">
    <property type="term" value="F:magnesium ion binding"/>
    <property type="evidence" value="ECO:0007669"/>
    <property type="project" value="UniProtKB-UniRule"/>
</dbReference>
<dbReference type="GO" id="GO:0006310">
    <property type="term" value="P:DNA recombination"/>
    <property type="evidence" value="ECO:0007669"/>
    <property type="project" value="UniProtKB-UniRule"/>
</dbReference>
<dbReference type="GO" id="GO:0006281">
    <property type="term" value="P:DNA repair"/>
    <property type="evidence" value="ECO:0007669"/>
    <property type="project" value="UniProtKB-UniRule"/>
</dbReference>
<dbReference type="CDD" id="cd16962">
    <property type="entry name" value="RuvC"/>
    <property type="match status" value="1"/>
</dbReference>
<dbReference type="FunFam" id="3.30.420.10:FF:000002">
    <property type="entry name" value="Crossover junction endodeoxyribonuclease RuvC"/>
    <property type="match status" value="1"/>
</dbReference>
<dbReference type="Gene3D" id="3.30.420.10">
    <property type="entry name" value="Ribonuclease H-like superfamily/Ribonuclease H"/>
    <property type="match status" value="1"/>
</dbReference>
<dbReference type="HAMAP" id="MF_00034">
    <property type="entry name" value="RuvC"/>
    <property type="match status" value="1"/>
</dbReference>
<dbReference type="InterPro" id="IPR012337">
    <property type="entry name" value="RNaseH-like_sf"/>
</dbReference>
<dbReference type="InterPro" id="IPR036397">
    <property type="entry name" value="RNaseH_sf"/>
</dbReference>
<dbReference type="InterPro" id="IPR020563">
    <property type="entry name" value="X-over_junc_endoDNase_Mg_BS"/>
</dbReference>
<dbReference type="InterPro" id="IPR002176">
    <property type="entry name" value="X-over_junc_endoDNase_RuvC"/>
</dbReference>
<dbReference type="NCBIfam" id="TIGR00228">
    <property type="entry name" value="ruvC"/>
    <property type="match status" value="1"/>
</dbReference>
<dbReference type="PANTHER" id="PTHR30194">
    <property type="entry name" value="CROSSOVER JUNCTION ENDODEOXYRIBONUCLEASE RUVC"/>
    <property type="match status" value="1"/>
</dbReference>
<dbReference type="PANTHER" id="PTHR30194:SF3">
    <property type="entry name" value="CROSSOVER JUNCTION ENDODEOXYRIBONUCLEASE RUVC"/>
    <property type="match status" value="1"/>
</dbReference>
<dbReference type="Pfam" id="PF02075">
    <property type="entry name" value="RuvC"/>
    <property type="match status" value="1"/>
</dbReference>
<dbReference type="PRINTS" id="PR00696">
    <property type="entry name" value="RSOLVASERUVC"/>
</dbReference>
<dbReference type="SUPFAM" id="SSF53098">
    <property type="entry name" value="Ribonuclease H-like"/>
    <property type="match status" value="1"/>
</dbReference>
<dbReference type="PROSITE" id="PS01321">
    <property type="entry name" value="RUVC"/>
    <property type="match status" value="1"/>
</dbReference>
<comment type="function">
    <text evidence="1">The RuvA-RuvB-RuvC complex processes Holliday junction (HJ) DNA during genetic recombination and DNA repair. Endonuclease that resolves HJ intermediates. Cleaves cruciform DNA by making single-stranded nicks across the HJ at symmetrical positions within the homologous arms, yielding a 5'-phosphate and a 3'-hydroxyl group; requires a central core of homology in the junction. The consensus cleavage sequence is 5'-(A/T)TT(C/G)-3'. Cleavage occurs on the 3'-side of the TT dinucleotide at the point of strand exchange. HJ branch migration catalyzed by RuvA-RuvB allows RuvC to scan DNA until it finds its consensus sequence, where it cleaves and resolves the cruciform DNA.</text>
</comment>
<comment type="catalytic activity">
    <reaction evidence="1">
        <text>Endonucleolytic cleavage at a junction such as a reciprocal single-stranded crossover between two homologous DNA duplexes (Holliday junction).</text>
        <dbReference type="EC" id="3.1.21.10"/>
    </reaction>
</comment>
<comment type="cofactor">
    <cofactor evidence="1">
        <name>Mg(2+)</name>
        <dbReference type="ChEBI" id="CHEBI:18420"/>
    </cofactor>
    <text evidence="1">Binds 2 Mg(2+) ion per subunit.</text>
</comment>
<comment type="subunit">
    <text evidence="1">Homodimer which binds Holliday junction (HJ) DNA. The HJ becomes 2-fold symmetrical on binding to RuvC with unstacked arms; it has a different conformation from HJ DNA in complex with RuvA. In the full resolvosome a probable DNA-RuvA(4)-RuvB(12)-RuvC(2) complex forms which resolves the HJ.</text>
</comment>
<comment type="subcellular location">
    <subcellularLocation>
        <location evidence="1">Cytoplasm</location>
    </subcellularLocation>
</comment>
<comment type="similarity">
    <text evidence="1">Belongs to the RuvC family.</text>
</comment>
<accession>B2K322</accession>
<protein>
    <recommendedName>
        <fullName evidence="1">Crossover junction endodeoxyribonuclease RuvC</fullName>
        <ecNumber evidence="1">3.1.21.10</ecNumber>
    </recommendedName>
    <alternativeName>
        <fullName evidence="1">Holliday junction nuclease RuvC</fullName>
    </alternativeName>
    <alternativeName>
        <fullName evidence="1">Holliday junction resolvase RuvC</fullName>
    </alternativeName>
</protein>
<name>RUVC_YERPB</name>
<proteinExistence type="inferred from homology"/>
<reference key="1">
    <citation type="submission" date="2008-04" db="EMBL/GenBank/DDBJ databases">
        <title>Complete sequence of Yersinia pseudotuberculosis PB1/+.</title>
        <authorList>
            <person name="Copeland A."/>
            <person name="Lucas S."/>
            <person name="Lapidus A."/>
            <person name="Glavina del Rio T."/>
            <person name="Dalin E."/>
            <person name="Tice H."/>
            <person name="Bruce D."/>
            <person name="Goodwin L."/>
            <person name="Pitluck S."/>
            <person name="Munk A.C."/>
            <person name="Brettin T."/>
            <person name="Detter J.C."/>
            <person name="Han C."/>
            <person name="Tapia R."/>
            <person name="Schmutz J."/>
            <person name="Larimer F."/>
            <person name="Land M."/>
            <person name="Hauser L."/>
            <person name="Challacombe J.F."/>
            <person name="Green L."/>
            <person name="Lindler L.E."/>
            <person name="Nikolich M.P."/>
            <person name="Richardson P."/>
        </authorList>
    </citation>
    <scope>NUCLEOTIDE SEQUENCE [LARGE SCALE GENOMIC DNA]</scope>
    <source>
        <strain>PB1/+</strain>
    </source>
</reference>
<evidence type="ECO:0000255" key="1">
    <source>
        <dbReference type="HAMAP-Rule" id="MF_00034"/>
    </source>
</evidence>
<feature type="chain" id="PRO_1000090577" description="Crossover junction endodeoxyribonuclease RuvC">
    <location>
        <begin position="1"/>
        <end position="173"/>
    </location>
</feature>
<feature type="active site" evidence="1">
    <location>
        <position position="8"/>
    </location>
</feature>
<feature type="active site" evidence="1">
    <location>
        <position position="67"/>
    </location>
</feature>
<feature type="active site" evidence="1">
    <location>
        <position position="139"/>
    </location>
</feature>
<feature type="binding site" evidence="1">
    <location>
        <position position="8"/>
    </location>
    <ligand>
        <name>Mg(2+)</name>
        <dbReference type="ChEBI" id="CHEBI:18420"/>
        <label>1</label>
    </ligand>
</feature>
<feature type="binding site" evidence="1">
    <location>
        <position position="67"/>
    </location>
    <ligand>
        <name>Mg(2+)</name>
        <dbReference type="ChEBI" id="CHEBI:18420"/>
        <label>2</label>
    </ligand>
</feature>
<feature type="binding site" evidence="1">
    <location>
        <position position="139"/>
    </location>
    <ligand>
        <name>Mg(2+)</name>
        <dbReference type="ChEBI" id="CHEBI:18420"/>
        <label>1</label>
    </ligand>
</feature>
<sequence length="173" mass="18641">MAIVLGIDPGSRVTGYGVIRQQGRQLTYLGSGCIRTVVDDMPTRLKLIYAGVTEIITQFQPDFFAIEQVFMAKNPDSALKLGQARGAAIVAAVNLNLPVSEYAARQVKQTVVGTGAAEKSQVQHMVRSLLKLPANPQADAADALAIAITHCHLSQNTLRLGNDQMTLSRGRIR</sequence>
<gene>
    <name evidence="1" type="primary">ruvC</name>
    <name type="ordered locus">YPTS_2098</name>
</gene>
<organism>
    <name type="scientific">Yersinia pseudotuberculosis serotype IB (strain PB1/+)</name>
    <dbReference type="NCBI Taxonomy" id="502801"/>
    <lineage>
        <taxon>Bacteria</taxon>
        <taxon>Pseudomonadati</taxon>
        <taxon>Pseudomonadota</taxon>
        <taxon>Gammaproteobacteria</taxon>
        <taxon>Enterobacterales</taxon>
        <taxon>Yersiniaceae</taxon>
        <taxon>Yersinia</taxon>
    </lineage>
</organism>
<keyword id="KW-0963">Cytoplasm</keyword>
<keyword id="KW-0227">DNA damage</keyword>
<keyword id="KW-0233">DNA recombination</keyword>
<keyword id="KW-0234">DNA repair</keyword>
<keyword id="KW-0238">DNA-binding</keyword>
<keyword id="KW-0255">Endonuclease</keyword>
<keyword id="KW-0378">Hydrolase</keyword>
<keyword id="KW-0460">Magnesium</keyword>
<keyword id="KW-0479">Metal-binding</keyword>
<keyword id="KW-0540">Nuclease</keyword>